<dbReference type="EC" id="4.98.1.1" evidence="2"/>
<dbReference type="EC" id="1.11.1.-" evidence="2"/>
<dbReference type="EMBL" id="CP000038">
    <property type="protein sequence ID" value="AAZ87766.1"/>
    <property type="molecule type" value="Genomic_DNA"/>
</dbReference>
<dbReference type="RefSeq" id="WP_001199462.1">
    <property type="nucleotide sequence ID" value="NC_007384.1"/>
</dbReference>
<dbReference type="SMR" id="Q3Z396"/>
<dbReference type="PeroxiBase" id="5869">
    <property type="entry name" value="SsoDyPrx01"/>
</dbReference>
<dbReference type="GeneID" id="93776390"/>
<dbReference type="KEGG" id="ssn:SSON_1038"/>
<dbReference type="HOGENOM" id="CLU_039488_0_0_6"/>
<dbReference type="Proteomes" id="UP000002529">
    <property type="component" value="Chromosome"/>
</dbReference>
<dbReference type="GO" id="GO:0005829">
    <property type="term" value="C:cytosol"/>
    <property type="evidence" value="ECO:0007669"/>
    <property type="project" value="TreeGrafter"/>
</dbReference>
<dbReference type="GO" id="GO:0042597">
    <property type="term" value="C:periplasmic space"/>
    <property type="evidence" value="ECO:0007669"/>
    <property type="project" value="UniProtKB-SubCell"/>
</dbReference>
<dbReference type="GO" id="GO:0004325">
    <property type="term" value="F:ferrochelatase activity"/>
    <property type="evidence" value="ECO:0007669"/>
    <property type="project" value="RHEA"/>
</dbReference>
<dbReference type="GO" id="GO:0020037">
    <property type="term" value="F:heme binding"/>
    <property type="evidence" value="ECO:0007669"/>
    <property type="project" value="InterPro"/>
</dbReference>
<dbReference type="GO" id="GO:0046872">
    <property type="term" value="F:metal ion binding"/>
    <property type="evidence" value="ECO:0007669"/>
    <property type="project" value="UniProtKB-KW"/>
</dbReference>
<dbReference type="GO" id="GO:0004601">
    <property type="term" value="F:peroxidase activity"/>
    <property type="evidence" value="ECO:0007669"/>
    <property type="project" value="UniProtKB-KW"/>
</dbReference>
<dbReference type="GO" id="GO:0033212">
    <property type="term" value="P:iron import into cell"/>
    <property type="evidence" value="ECO:0007669"/>
    <property type="project" value="InterPro"/>
</dbReference>
<dbReference type="InterPro" id="IPR011008">
    <property type="entry name" value="Dimeric_a/b-barrel"/>
</dbReference>
<dbReference type="InterPro" id="IPR048328">
    <property type="entry name" value="Dyp_perox_C"/>
</dbReference>
<dbReference type="InterPro" id="IPR048327">
    <property type="entry name" value="Dyp_perox_N"/>
</dbReference>
<dbReference type="InterPro" id="IPR006314">
    <property type="entry name" value="Dyp_peroxidase"/>
</dbReference>
<dbReference type="InterPro" id="IPR006313">
    <property type="entry name" value="EfeB/EfeN"/>
</dbReference>
<dbReference type="InterPro" id="IPR006311">
    <property type="entry name" value="TAT_signal"/>
</dbReference>
<dbReference type="NCBIfam" id="TIGR01413">
    <property type="entry name" value="Dyp_perox_fam"/>
    <property type="match status" value="1"/>
</dbReference>
<dbReference type="NCBIfam" id="TIGR01412">
    <property type="entry name" value="tat_substr_1"/>
    <property type="match status" value="1"/>
</dbReference>
<dbReference type="PANTHER" id="PTHR30521:SF4">
    <property type="entry name" value="DEFERROCHELATASE"/>
    <property type="match status" value="1"/>
</dbReference>
<dbReference type="PANTHER" id="PTHR30521">
    <property type="entry name" value="DEFERROCHELATASE/PEROXIDASE"/>
    <property type="match status" value="1"/>
</dbReference>
<dbReference type="Pfam" id="PF20628">
    <property type="entry name" value="Dyp_perox_C"/>
    <property type="match status" value="1"/>
</dbReference>
<dbReference type="Pfam" id="PF04261">
    <property type="entry name" value="Dyp_perox_N"/>
    <property type="match status" value="1"/>
</dbReference>
<dbReference type="SUPFAM" id="SSF54909">
    <property type="entry name" value="Dimeric alpha+beta barrel"/>
    <property type="match status" value="1"/>
</dbReference>
<dbReference type="PROSITE" id="PS51404">
    <property type="entry name" value="DYP_PEROXIDASE"/>
    <property type="match status" value="1"/>
</dbReference>
<dbReference type="PROSITE" id="PS51318">
    <property type="entry name" value="TAT"/>
    <property type="match status" value="1"/>
</dbReference>
<reference key="1">
    <citation type="journal article" date="2005" name="Nucleic Acids Res.">
        <title>Genome dynamics and diversity of Shigella species, the etiologic agents of bacillary dysentery.</title>
        <authorList>
            <person name="Yang F."/>
            <person name="Yang J."/>
            <person name="Zhang X."/>
            <person name="Chen L."/>
            <person name="Jiang Y."/>
            <person name="Yan Y."/>
            <person name="Tang X."/>
            <person name="Wang J."/>
            <person name="Xiong Z."/>
            <person name="Dong J."/>
            <person name="Xue Y."/>
            <person name="Zhu Y."/>
            <person name="Xu X."/>
            <person name="Sun L."/>
            <person name="Chen S."/>
            <person name="Nie H."/>
            <person name="Peng J."/>
            <person name="Xu J."/>
            <person name="Wang Y."/>
            <person name="Yuan Z."/>
            <person name="Wen Y."/>
            <person name="Yao Z."/>
            <person name="Shen Y."/>
            <person name="Qiang B."/>
            <person name="Hou Y."/>
            <person name="Yu J."/>
            <person name="Jin Q."/>
        </authorList>
    </citation>
    <scope>NUCLEOTIDE SEQUENCE [LARGE SCALE GENOMIC DNA]</scope>
    <source>
        <strain>Ss046</strain>
    </source>
</reference>
<keyword id="KW-0349">Heme</keyword>
<keyword id="KW-0408">Iron</keyword>
<keyword id="KW-0456">Lyase</keyword>
<keyword id="KW-0479">Metal-binding</keyword>
<keyword id="KW-0560">Oxidoreductase</keyword>
<keyword id="KW-0574">Periplasm</keyword>
<keyword id="KW-0575">Peroxidase</keyword>
<keyword id="KW-1185">Reference proteome</keyword>
<keyword id="KW-0732">Signal</keyword>
<comment type="function">
    <text evidence="2">Involved in the recovery of exogenous heme iron. Extracts iron from heme while preserving the protoporphyrin ring intact.</text>
</comment>
<comment type="catalytic activity">
    <reaction evidence="2">
        <text>heme b + 2 H(+) = protoporphyrin IX + Fe(2+)</text>
        <dbReference type="Rhea" id="RHEA:22584"/>
        <dbReference type="ChEBI" id="CHEBI:15378"/>
        <dbReference type="ChEBI" id="CHEBI:29033"/>
        <dbReference type="ChEBI" id="CHEBI:57306"/>
        <dbReference type="ChEBI" id="CHEBI:60344"/>
        <dbReference type="EC" id="4.98.1.1"/>
    </reaction>
    <physiologicalReaction direction="left-to-right" evidence="2">
        <dbReference type="Rhea" id="RHEA:22585"/>
    </physiologicalReaction>
</comment>
<comment type="cofactor">
    <cofactor evidence="1">
        <name>heme b</name>
        <dbReference type="ChEBI" id="CHEBI:60344"/>
    </cofactor>
    <text evidence="1">Binds 1 heme b (iron(II)-protoporphyrin IX) group non-covalently per subunit.</text>
</comment>
<comment type="subunit">
    <text evidence="1">Homodimer. Part of a ferrous iron transporter composed of EfeU, EfeO and EfeB (By similarity).</text>
</comment>
<comment type="subcellular location">
    <subcellularLocation>
        <location evidence="1">Periplasm</location>
    </subcellularLocation>
</comment>
<comment type="PTM">
    <text>Predicted to be exported by the Tat system. The position of the signal peptide cleavage has not been experimentally proven.</text>
</comment>
<comment type="similarity">
    <text evidence="4">Belongs to the DyP-type peroxidase family. EfeB subfamily.</text>
</comment>
<organism>
    <name type="scientific">Shigella sonnei (strain Ss046)</name>
    <dbReference type="NCBI Taxonomy" id="300269"/>
    <lineage>
        <taxon>Bacteria</taxon>
        <taxon>Pseudomonadati</taxon>
        <taxon>Pseudomonadota</taxon>
        <taxon>Gammaproteobacteria</taxon>
        <taxon>Enterobacterales</taxon>
        <taxon>Enterobacteriaceae</taxon>
        <taxon>Shigella</taxon>
    </lineage>
</organism>
<name>EFEB_SHISS</name>
<evidence type="ECO:0000250" key="1"/>
<evidence type="ECO:0000250" key="2">
    <source>
        <dbReference type="UniProtKB" id="P31545"/>
    </source>
</evidence>
<evidence type="ECO:0000255" key="3">
    <source>
        <dbReference type="PROSITE-ProRule" id="PRU00648"/>
    </source>
</evidence>
<evidence type="ECO:0000305" key="4"/>
<protein>
    <recommendedName>
        <fullName>Deferrochelatase</fullName>
        <ecNumber evidence="2">4.98.1.1</ecNumber>
    </recommendedName>
    <alternativeName>
        <fullName>Peroxidase EfeB</fullName>
        <ecNumber evidence="2">1.11.1.-</ecNumber>
    </alternativeName>
</protein>
<gene>
    <name type="primary">efeB</name>
    <name type="ordered locus">SSON_1038</name>
</gene>
<accession>Q3Z396</accession>
<feature type="signal peptide" description="Tat-type signal" evidence="3">
    <location>
        <begin position="1"/>
        <end position="35"/>
    </location>
</feature>
<feature type="chain" id="PRO_0000278550" description="Deferrochelatase">
    <location>
        <begin position="36"/>
        <end position="423"/>
    </location>
</feature>
<feature type="binding site" evidence="2">
    <location>
        <begin position="236"/>
        <end position="238"/>
    </location>
    <ligand>
        <name>heme b</name>
        <dbReference type="ChEBI" id="CHEBI:60344"/>
    </ligand>
</feature>
<feature type="binding site" description="proximal binding residue" evidence="2">
    <location>
        <position position="329"/>
    </location>
    <ligand>
        <name>heme b</name>
        <dbReference type="ChEBI" id="CHEBI:60344"/>
    </ligand>
    <ligandPart>
        <name>Fe</name>
        <dbReference type="ChEBI" id="CHEBI:18248"/>
    </ligandPart>
</feature>
<feature type="binding site" evidence="2">
    <location>
        <begin position="334"/>
        <end position="336"/>
    </location>
    <ligand>
        <name>heme b</name>
        <dbReference type="ChEBI" id="CHEBI:60344"/>
    </ligand>
</feature>
<feature type="binding site" evidence="2">
    <location>
        <position position="347"/>
    </location>
    <ligand>
        <name>heme b</name>
        <dbReference type="ChEBI" id="CHEBI:60344"/>
    </ligand>
</feature>
<sequence length="423" mass="46738">MQYKDENGVNEPSRRRLLKGIGALALAGSCPVAHAQKTQSAPGTLSPDARNEKQPFYGEHQAGILTPQQAAMMLVAFDVLASDKADLERLFRLLTQRFAFLTQGGAAPETPNPRLPPLDSGILGGYIAPDNLTITLSVGHSLFDERFGLAPQMPKKLQKMTRFPNDSLDAALCHGDVLLQICANTQDTVIHALRDIIKHTPDLLSVRWKREGFISDHVSRSKGKETPINLLGFKDGTANPDSQNDKLMQKVVWVTADQQEPAWTIGGSYQAVRLIQFRVEFWDRTPLKEQQTIFGRDKQTGAPLGMQHEHDVPDYASDPEGKVIALDSHIRLANPRTAESESSLMLRRGYSYSLGVTNSGQLDMGLLFVCYQHDLEKGFLTVQKRLNGEALEEYVKPIGGGYFFSLPGVKDANDYLGSALLRV</sequence>
<proteinExistence type="inferred from homology"/>